<keyword id="KW-0067">ATP-binding</keyword>
<keyword id="KW-0347">Helicase</keyword>
<keyword id="KW-0378">Hydrolase</keyword>
<keyword id="KW-0547">Nucleotide-binding</keyword>
<keyword id="KW-0539">Nucleus</keyword>
<keyword id="KW-1185">Reference proteome</keyword>
<keyword id="KW-0694">RNA-binding</keyword>
<comment type="function">
    <text evidence="4">Probable RNA-dependent helicase. Functions in cell growth and proliferation. May have a role in ribosome biogenesis and, consequently, in protein biosynthesis.</text>
</comment>
<comment type="catalytic activity">
    <reaction>
        <text>ATP + H2O = ADP + phosphate + H(+)</text>
        <dbReference type="Rhea" id="RHEA:13065"/>
        <dbReference type="ChEBI" id="CHEBI:15377"/>
        <dbReference type="ChEBI" id="CHEBI:15378"/>
        <dbReference type="ChEBI" id="CHEBI:30616"/>
        <dbReference type="ChEBI" id="CHEBI:43474"/>
        <dbReference type="ChEBI" id="CHEBI:456216"/>
        <dbReference type="EC" id="3.6.4.13"/>
    </reaction>
</comment>
<comment type="subcellular location">
    <subcellularLocation>
        <location evidence="4">Nucleus</location>
        <location evidence="4">Nucleolus</location>
    </subcellularLocation>
</comment>
<comment type="miscellaneous">
    <text>Mutation in the pit gene produce larvae that cannot grow beyond the first instar larval stage although they can live as long as 7-10 days. All the tissues are equally affected and the perfectly shaped larvae are indistinguishable from first instar wild-type animals.</text>
</comment>
<comment type="miscellaneous">
    <text>'Pitchoune' means 'small' in Provence (Southern part of France).</text>
</comment>
<comment type="similarity">
    <text evidence="5">Belongs to the DEAD box helicase family. DDX18/HAS1 subfamily.</text>
</comment>
<comment type="sequence caution" evidence="5">
    <conflict type="frameshift">
        <sequence resource="EMBL-CDS" id="AAC27683"/>
    </conflict>
</comment>
<gene>
    <name type="primary">pit</name>
    <name type="ORF">CG6375</name>
</gene>
<protein>
    <recommendedName>
        <fullName>Probable ATP-dependent RNA helicase pitchoune</fullName>
        <ecNumber>3.6.4.13</ecNumber>
    </recommendedName>
</protein>
<dbReference type="EC" id="3.6.4.13"/>
<dbReference type="EMBL" id="U84552">
    <property type="protein sequence ID" value="AAC27683.1"/>
    <property type="status" value="ALT_FRAME"/>
    <property type="molecule type" value="mRNA"/>
</dbReference>
<dbReference type="EMBL" id="AE014297">
    <property type="protein sequence ID" value="AAF55951.2"/>
    <property type="molecule type" value="Genomic_DNA"/>
</dbReference>
<dbReference type="EMBL" id="AE014297">
    <property type="protein sequence ID" value="AAN13900.2"/>
    <property type="molecule type" value="Genomic_DNA"/>
</dbReference>
<dbReference type="EMBL" id="AY071402">
    <property type="protein sequence ID" value="AAL49024.1"/>
    <property type="molecule type" value="mRNA"/>
</dbReference>
<dbReference type="EMBL" id="AY119620">
    <property type="protein sequence ID" value="AAM50274.1"/>
    <property type="molecule type" value="mRNA"/>
</dbReference>
<dbReference type="RefSeq" id="NP_001287459.1">
    <property type="nucleotide sequence ID" value="NM_001300530.1"/>
</dbReference>
<dbReference type="RefSeq" id="NP_524446.3">
    <property type="nucleotide sequence ID" value="NM_079722.4"/>
</dbReference>
<dbReference type="RefSeq" id="NP_732694.2">
    <property type="nucleotide sequence ID" value="NM_169991.2"/>
</dbReference>
<dbReference type="SMR" id="Q9VD51"/>
<dbReference type="BioGRID" id="67556">
    <property type="interactions" value="27"/>
</dbReference>
<dbReference type="DIP" id="DIP-19700N"/>
<dbReference type="FunCoup" id="Q9VD51">
    <property type="interactions" value="1960"/>
</dbReference>
<dbReference type="IntAct" id="Q9VD51">
    <property type="interactions" value="70"/>
</dbReference>
<dbReference type="STRING" id="7227.FBpp0312062"/>
<dbReference type="PaxDb" id="7227-FBpp0083572"/>
<dbReference type="DNASU" id="42595"/>
<dbReference type="EnsemblMetazoa" id="FBtr0084174">
    <property type="protein sequence ID" value="FBpp0083572"/>
    <property type="gene ID" value="FBgn0266581"/>
</dbReference>
<dbReference type="EnsemblMetazoa" id="FBtr0084175">
    <property type="protein sequence ID" value="FBpp0083573"/>
    <property type="gene ID" value="FBgn0266581"/>
</dbReference>
<dbReference type="EnsemblMetazoa" id="FBtr0346345">
    <property type="protein sequence ID" value="FBpp0312062"/>
    <property type="gene ID" value="FBgn0266581"/>
</dbReference>
<dbReference type="GeneID" id="42595"/>
<dbReference type="KEGG" id="dme:Dmel_CG6375"/>
<dbReference type="UCSC" id="CG6375-RA">
    <property type="organism name" value="d. melanogaster"/>
</dbReference>
<dbReference type="UCSC" id="CG6375-RB">
    <property type="organism name" value="d. melanogaster"/>
</dbReference>
<dbReference type="AGR" id="FB:FBgn0266581"/>
<dbReference type="CTD" id="42595"/>
<dbReference type="FlyBase" id="FBgn0266581">
    <property type="gene designation" value="pit"/>
</dbReference>
<dbReference type="VEuPathDB" id="VectorBase:FBgn0266581"/>
<dbReference type="eggNOG" id="KOG0342">
    <property type="taxonomic scope" value="Eukaryota"/>
</dbReference>
<dbReference type="GeneTree" id="ENSGT00680000100037"/>
<dbReference type="HOGENOM" id="CLU_003041_26_5_1"/>
<dbReference type="InParanoid" id="Q9VD51"/>
<dbReference type="OMA" id="LMEFHSQ"/>
<dbReference type="OrthoDB" id="10259640at2759"/>
<dbReference type="PhylomeDB" id="Q9VD51"/>
<dbReference type="SignaLink" id="Q9VD51"/>
<dbReference type="BioGRID-ORCS" id="42595">
    <property type="hits" value="1 hit in 1 CRISPR screen"/>
</dbReference>
<dbReference type="CD-CODE" id="34A76419">
    <property type="entry name" value="Nucleolus"/>
</dbReference>
<dbReference type="ChiTaRS" id="pit">
    <property type="organism name" value="fly"/>
</dbReference>
<dbReference type="GenomeRNAi" id="42595"/>
<dbReference type="PRO" id="PR:Q9VD51"/>
<dbReference type="Proteomes" id="UP000000803">
    <property type="component" value="Chromosome 3R"/>
</dbReference>
<dbReference type="Bgee" id="FBgn0266581">
    <property type="expression patterns" value="Expressed in posterior terminal follicle cell in ovary and 117 other cell types or tissues"/>
</dbReference>
<dbReference type="ExpressionAtlas" id="Q9VD51">
    <property type="expression patterns" value="baseline and differential"/>
</dbReference>
<dbReference type="GO" id="GO:0005730">
    <property type="term" value="C:nucleolus"/>
    <property type="evidence" value="ECO:0000314"/>
    <property type="project" value="FlyBase"/>
</dbReference>
<dbReference type="GO" id="GO:0005524">
    <property type="term" value="F:ATP binding"/>
    <property type="evidence" value="ECO:0007669"/>
    <property type="project" value="UniProtKB-KW"/>
</dbReference>
<dbReference type="GO" id="GO:0016887">
    <property type="term" value="F:ATP hydrolysis activity"/>
    <property type="evidence" value="ECO:0007669"/>
    <property type="project" value="RHEA"/>
</dbReference>
<dbReference type="GO" id="GO:0003723">
    <property type="term" value="F:RNA binding"/>
    <property type="evidence" value="ECO:0007669"/>
    <property type="project" value="UniProtKB-KW"/>
</dbReference>
<dbReference type="GO" id="GO:0003724">
    <property type="term" value="F:RNA helicase activity"/>
    <property type="evidence" value="ECO:0000250"/>
    <property type="project" value="FlyBase"/>
</dbReference>
<dbReference type="GO" id="GO:0000463">
    <property type="term" value="P:maturation of LSU-rRNA from tricistronic rRNA transcript (SSU-rRNA, 5.8S rRNA, LSU-rRNA)"/>
    <property type="evidence" value="ECO:0000318"/>
    <property type="project" value="GO_Central"/>
</dbReference>
<dbReference type="CDD" id="cd17942">
    <property type="entry name" value="DEADc_DDX18"/>
    <property type="match status" value="1"/>
</dbReference>
<dbReference type="CDD" id="cd18787">
    <property type="entry name" value="SF2_C_DEAD"/>
    <property type="match status" value="1"/>
</dbReference>
<dbReference type="FunFam" id="3.40.50.300:FF:000379">
    <property type="entry name" value="RNA helicase"/>
    <property type="match status" value="1"/>
</dbReference>
<dbReference type="FunFam" id="3.40.50.300:FF:000460">
    <property type="entry name" value="RNA helicase"/>
    <property type="match status" value="1"/>
</dbReference>
<dbReference type="Gene3D" id="3.40.50.300">
    <property type="entry name" value="P-loop containing nucleotide triphosphate hydrolases"/>
    <property type="match status" value="2"/>
</dbReference>
<dbReference type="InterPro" id="IPR044773">
    <property type="entry name" value="DDX18/Has1_DEADc"/>
</dbReference>
<dbReference type="InterPro" id="IPR011545">
    <property type="entry name" value="DEAD/DEAH_box_helicase_dom"/>
</dbReference>
<dbReference type="InterPro" id="IPR014001">
    <property type="entry name" value="Helicase_ATP-bd"/>
</dbReference>
<dbReference type="InterPro" id="IPR001650">
    <property type="entry name" value="Helicase_C-like"/>
</dbReference>
<dbReference type="InterPro" id="IPR027417">
    <property type="entry name" value="P-loop_NTPase"/>
</dbReference>
<dbReference type="InterPro" id="IPR014014">
    <property type="entry name" value="RNA_helicase_DEAD_Q_motif"/>
</dbReference>
<dbReference type="InterPro" id="IPR025313">
    <property type="entry name" value="SPB4-like_CTE"/>
</dbReference>
<dbReference type="PANTHER" id="PTHR24031">
    <property type="entry name" value="RNA HELICASE"/>
    <property type="match status" value="1"/>
</dbReference>
<dbReference type="Pfam" id="PF13959">
    <property type="entry name" value="CTE_SPB4"/>
    <property type="match status" value="1"/>
</dbReference>
<dbReference type="Pfam" id="PF00270">
    <property type="entry name" value="DEAD"/>
    <property type="match status" value="1"/>
</dbReference>
<dbReference type="Pfam" id="PF00271">
    <property type="entry name" value="Helicase_C"/>
    <property type="match status" value="1"/>
</dbReference>
<dbReference type="SMART" id="SM00487">
    <property type="entry name" value="DEXDc"/>
    <property type="match status" value="1"/>
</dbReference>
<dbReference type="SMART" id="SM01178">
    <property type="entry name" value="DUF4217"/>
    <property type="match status" value="1"/>
</dbReference>
<dbReference type="SMART" id="SM00490">
    <property type="entry name" value="HELICc"/>
    <property type="match status" value="1"/>
</dbReference>
<dbReference type="SUPFAM" id="SSF52540">
    <property type="entry name" value="P-loop containing nucleoside triphosphate hydrolases"/>
    <property type="match status" value="1"/>
</dbReference>
<dbReference type="PROSITE" id="PS51192">
    <property type="entry name" value="HELICASE_ATP_BIND_1"/>
    <property type="match status" value="1"/>
</dbReference>
<dbReference type="PROSITE" id="PS51194">
    <property type="entry name" value="HELICASE_CTER"/>
    <property type="match status" value="1"/>
</dbReference>
<dbReference type="PROSITE" id="PS51195">
    <property type="entry name" value="Q_MOTIF"/>
    <property type="match status" value="1"/>
</dbReference>
<feature type="chain" id="PRO_0000055003" description="Probable ATP-dependent RNA helicase pitchoune">
    <location>
        <begin position="1"/>
        <end position="680"/>
    </location>
</feature>
<feature type="domain" description="Helicase ATP-binding" evidence="1">
    <location>
        <begin position="218"/>
        <end position="393"/>
    </location>
</feature>
<feature type="domain" description="Helicase C-terminal" evidence="2">
    <location>
        <begin position="407"/>
        <end position="577"/>
    </location>
</feature>
<feature type="region of interest" description="Disordered" evidence="3">
    <location>
        <begin position="1"/>
        <end position="168"/>
    </location>
</feature>
<feature type="region of interest" description="Disordered" evidence="3">
    <location>
        <begin position="659"/>
        <end position="680"/>
    </location>
</feature>
<feature type="short sequence motif" description="Q motif">
    <location>
        <begin position="187"/>
        <end position="215"/>
    </location>
</feature>
<feature type="short sequence motif" description="DEVD box">
    <location>
        <begin position="341"/>
        <end position="344"/>
    </location>
</feature>
<feature type="compositionally biased region" description="Polar residues" evidence="3">
    <location>
        <begin position="29"/>
        <end position="42"/>
    </location>
</feature>
<feature type="compositionally biased region" description="Acidic residues" evidence="3">
    <location>
        <begin position="59"/>
        <end position="69"/>
    </location>
</feature>
<feature type="compositionally biased region" description="Basic residues" evidence="3">
    <location>
        <begin position="74"/>
        <end position="83"/>
    </location>
</feature>
<feature type="compositionally biased region" description="Acidic residues" evidence="3">
    <location>
        <begin position="95"/>
        <end position="141"/>
    </location>
</feature>
<feature type="compositionally biased region" description="Basic and acidic residues" evidence="3">
    <location>
        <begin position="670"/>
        <end position="680"/>
    </location>
</feature>
<feature type="binding site" evidence="1">
    <location>
        <begin position="231"/>
        <end position="238"/>
    </location>
    <ligand>
        <name>ATP</name>
        <dbReference type="ChEBI" id="CHEBI:30616"/>
    </ligand>
</feature>
<feature type="sequence conflict" description="In Ref. 1; AAC27683." evidence="5" ref="1">
    <original>N</original>
    <variation>K</variation>
    <location>
        <position position="30"/>
    </location>
</feature>
<feature type="sequence conflict" description="In Ref. 1; AAC27683." evidence="5" ref="1">
    <original>V</original>
    <variation>A</variation>
    <location>
        <position position="115"/>
    </location>
</feature>
<feature type="sequence conflict" description="In Ref. 1; AAC27683." evidence="5" ref="1">
    <original>DDPREY</original>
    <variation>GDQASI</variation>
    <location>
        <begin position="512"/>
        <end position="517"/>
    </location>
</feature>
<feature type="sequence conflict" description="In Ref. 1; AAC27683." evidence="5" ref="1">
    <original>GAAKRERPEKR</original>
    <variation>ARPSGSDRKSD</variation>
    <location>
        <begin position="634"/>
        <end position="644"/>
    </location>
</feature>
<accession>Q9VD51</accession>
<accession>A4V384</accession>
<accession>O77001</accession>
<accession>Q8SYP5</accession>
<organism>
    <name type="scientific">Drosophila melanogaster</name>
    <name type="common">Fruit fly</name>
    <dbReference type="NCBI Taxonomy" id="7227"/>
    <lineage>
        <taxon>Eukaryota</taxon>
        <taxon>Metazoa</taxon>
        <taxon>Ecdysozoa</taxon>
        <taxon>Arthropoda</taxon>
        <taxon>Hexapoda</taxon>
        <taxon>Insecta</taxon>
        <taxon>Pterygota</taxon>
        <taxon>Neoptera</taxon>
        <taxon>Endopterygota</taxon>
        <taxon>Diptera</taxon>
        <taxon>Brachycera</taxon>
        <taxon>Muscomorpha</taxon>
        <taxon>Ephydroidea</taxon>
        <taxon>Drosophilidae</taxon>
        <taxon>Drosophila</taxon>
        <taxon>Sophophora</taxon>
    </lineage>
</organism>
<reference key="1">
    <citation type="journal article" date="1998" name="Development">
        <title>A Drosophila RNA helicase gene, pitchoune, is required for cell growth and proliferation and is a potential target of d-Myc.</title>
        <authorList>
            <person name="Zaffran S."/>
            <person name="Chartier A."/>
            <person name="Gallant P."/>
            <person name="Astier M."/>
            <person name="Arquier N."/>
            <person name="Doherty D."/>
            <person name="Gratecos D."/>
            <person name="Semeriva M."/>
        </authorList>
    </citation>
    <scope>NUCLEOTIDE SEQUENCE [MRNA]</scope>
    <scope>FUNCTION</scope>
    <scope>SUBCELLULAR LOCATION</scope>
    <source>
        <strain>Oregon-R</strain>
    </source>
</reference>
<reference key="2">
    <citation type="journal article" date="2000" name="Science">
        <title>The genome sequence of Drosophila melanogaster.</title>
        <authorList>
            <person name="Adams M.D."/>
            <person name="Celniker S.E."/>
            <person name="Holt R.A."/>
            <person name="Evans C.A."/>
            <person name="Gocayne J.D."/>
            <person name="Amanatides P.G."/>
            <person name="Scherer S.E."/>
            <person name="Li P.W."/>
            <person name="Hoskins R.A."/>
            <person name="Galle R.F."/>
            <person name="George R.A."/>
            <person name="Lewis S.E."/>
            <person name="Richards S."/>
            <person name="Ashburner M."/>
            <person name="Henderson S.N."/>
            <person name="Sutton G.G."/>
            <person name="Wortman J.R."/>
            <person name="Yandell M.D."/>
            <person name="Zhang Q."/>
            <person name="Chen L.X."/>
            <person name="Brandon R.C."/>
            <person name="Rogers Y.-H.C."/>
            <person name="Blazej R.G."/>
            <person name="Champe M."/>
            <person name="Pfeiffer B.D."/>
            <person name="Wan K.H."/>
            <person name="Doyle C."/>
            <person name="Baxter E.G."/>
            <person name="Helt G."/>
            <person name="Nelson C.R."/>
            <person name="Miklos G.L.G."/>
            <person name="Abril J.F."/>
            <person name="Agbayani A."/>
            <person name="An H.-J."/>
            <person name="Andrews-Pfannkoch C."/>
            <person name="Baldwin D."/>
            <person name="Ballew R.M."/>
            <person name="Basu A."/>
            <person name="Baxendale J."/>
            <person name="Bayraktaroglu L."/>
            <person name="Beasley E.M."/>
            <person name="Beeson K.Y."/>
            <person name="Benos P.V."/>
            <person name="Berman B.P."/>
            <person name="Bhandari D."/>
            <person name="Bolshakov S."/>
            <person name="Borkova D."/>
            <person name="Botchan M.R."/>
            <person name="Bouck J."/>
            <person name="Brokstein P."/>
            <person name="Brottier P."/>
            <person name="Burtis K.C."/>
            <person name="Busam D.A."/>
            <person name="Butler H."/>
            <person name="Cadieu E."/>
            <person name="Center A."/>
            <person name="Chandra I."/>
            <person name="Cherry J.M."/>
            <person name="Cawley S."/>
            <person name="Dahlke C."/>
            <person name="Davenport L.B."/>
            <person name="Davies P."/>
            <person name="de Pablos B."/>
            <person name="Delcher A."/>
            <person name="Deng Z."/>
            <person name="Mays A.D."/>
            <person name="Dew I."/>
            <person name="Dietz S.M."/>
            <person name="Dodson K."/>
            <person name="Doup L.E."/>
            <person name="Downes M."/>
            <person name="Dugan-Rocha S."/>
            <person name="Dunkov B.C."/>
            <person name="Dunn P."/>
            <person name="Durbin K.J."/>
            <person name="Evangelista C.C."/>
            <person name="Ferraz C."/>
            <person name="Ferriera S."/>
            <person name="Fleischmann W."/>
            <person name="Fosler C."/>
            <person name="Gabrielian A.E."/>
            <person name="Garg N.S."/>
            <person name="Gelbart W.M."/>
            <person name="Glasser K."/>
            <person name="Glodek A."/>
            <person name="Gong F."/>
            <person name="Gorrell J.H."/>
            <person name="Gu Z."/>
            <person name="Guan P."/>
            <person name="Harris M."/>
            <person name="Harris N.L."/>
            <person name="Harvey D.A."/>
            <person name="Heiman T.J."/>
            <person name="Hernandez J.R."/>
            <person name="Houck J."/>
            <person name="Hostin D."/>
            <person name="Houston K.A."/>
            <person name="Howland T.J."/>
            <person name="Wei M.-H."/>
            <person name="Ibegwam C."/>
            <person name="Jalali M."/>
            <person name="Kalush F."/>
            <person name="Karpen G.H."/>
            <person name="Ke Z."/>
            <person name="Kennison J.A."/>
            <person name="Ketchum K.A."/>
            <person name="Kimmel B.E."/>
            <person name="Kodira C.D."/>
            <person name="Kraft C.L."/>
            <person name="Kravitz S."/>
            <person name="Kulp D."/>
            <person name="Lai Z."/>
            <person name="Lasko P."/>
            <person name="Lei Y."/>
            <person name="Levitsky A.A."/>
            <person name="Li J.H."/>
            <person name="Li Z."/>
            <person name="Liang Y."/>
            <person name="Lin X."/>
            <person name="Liu X."/>
            <person name="Mattei B."/>
            <person name="McIntosh T.C."/>
            <person name="McLeod M.P."/>
            <person name="McPherson D."/>
            <person name="Merkulov G."/>
            <person name="Milshina N.V."/>
            <person name="Mobarry C."/>
            <person name="Morris J."/>
            <person name="Moshrefi A."/>
            <person name="Mount S.M."/>
            <person name="Moy M."/>
            <person name="Murphy B."/>
            <person name="Murphy L."/>
            <person name="Muzny D.M."/>
            <person name="Nelson D.L."/>
            <person name="Nelson D.R."/>
            <person name="Nelson K.A."/>
            <person name="Nixon K."/>
            <person name="Nusskern D.R."/>
            <person name="Pacleb J.M."/>
            <person name="Palazzolo M."/>
            <person name="Pittman G.S."/>
            <person name="Pan S."/>
            <person name="Pollard J."/>
            <person name="Puri V."/>
            <person name="Reese M.G."/>
            <person name="Reinert K."/>
            <person name="Remington K."/>
            <person name="Saunders R.D.C."/>
            <person name="Scheeler F."/>
            <person name="Shen H."/>
            <person name="Shue B.C."/>
            <person name="Siden-Kiamos I."/>
            <person name="Simpson M."/>
            <person name="Skupski M.P."/>
            <person name="Smith T.J."/>
            <person name="Spier E."/>
            <person name="Spradling A.C."/>
            <person name="Stapleton M."/>
            <person name="Strong R."/>
            <person name="Sun E."/>
            <person name="Svirskas R."/>
            <person name="Tector C."/>
            <person name="Turner R."/>
            <person name="Venter E."/>
            <person name="Wang A.H."/>
            <person name="Wang X."/>
            <person name="Wang Z.-Y."/>
            <person name="Wassarman D.A."/>
            <person name="Weinstock G.M."/>
            <person name="Weissenbach J."/>
            <person name="Williams S.M."/>
            <person name="Woodage T."/>
            <person name="Worley K.C."/>
            <person name="Wu D."/>
            <person name="Yang S."/>
            <person name="Yao Q.A."/>
            <person name="Ye J."/>
            <person name="Yeh R.-F."/>
            <person name="Zaveri J.S."/>
            <person name="Zhan M."/>
            <person name="Zhang G."/>
            <person name="Zhao Q."/>
            <person name="Zheng L."/>
            <person name="Zheng X.H."/>
            <person name="Zhong F.N."/>
            <person name="Zhong W."/>
            <person name="Zhou X."/>
            <person name="Zhu S.C."/>
            <person name="Zhu X."/>
            <person name="Smith H.O."/>
            <person name="Gibbs R.A."/>
            <person name="Myers E.W."/>
            <person name="Rubin G.M."/>
            <person name="Venter J.C."/>
        </authorList>
    </citation>
    <scope>NUCLEOTIDE SEQUENCE [LARGE SCALE GENOMIC DNA]</scope>
    <source>
        <strain>Berkeley</strain>
    </source>
</reference>
<reference key="3">
    <citation type="journal article" date="2002" name="Genome Biol.">
        <title>Annotation of the Drosophila melanogaster euchromatic genome: a systematic review.</title>
        <authorList>
            <person name="Misra S."/>
            <person name="Crosby M.A."/>
            <person name="Mungall C.J."/>
            <person name="Matthews B.B."/>
            <person name="Campbell K.S."/>
            <person name="Hradecky P."/>
            <person name="Huang Y."/>
            <person name="Kaminker J.S."/>
            <person name="Millburn G.H."/>
            <person name="Prochnik S.E."/>
            <person name="Smith C.D."/>
            <person name="Tupy J.L."/>
            <person name="Whitfield E.J."/>
            <person name="Bayraktaroglu L."/>
            <person name="Berman B.P."/>
            <person name="Bettencourt B.R."/>
            <person name="Celniker S.E."/>
            <person name="de Grey A.D.N.J."/>
            <person name="Drysdale R.A."/>
            <person name="Harris N.L."/>
            <person name="Richter J."/>
            <person name="Russo S."/>
            <person name="Schroeder A.J."/>
            <person name="Shu S.Q."/>
            <person name="Stapleton M."/>
            <person name="Yamada C."/>
            <person name="Ashburner M."/>
            <person name="Gelbart W.M."/>
            <person name="Rubin G.M."/>
            <person name="Lewis S.E."/>
        </authorList>
    </citation>
    <scope>GENOME REANNOTATION</scope>
    <source>
        <strain>Berkeley</strain>
    </source>
</reference>
<reference key="4">
    <citation type="journal article" date="2002" name="Genome Biol.">
        <title>A Drosophila full-length cDNA resource.</title>
        <authorList>
            <person name="Stapleton M."/>
            <person name="Carlson J.W."/>
            <person name="Brokstein P."/>
            <person name="Yu C."/>
            <person name="Champe M."/>
            <person name="George R.A."/>
            <person name="Guarin H."/>
            <person name="Kronmiller B."/>
            <person name="Pacleb J.M."/>
            <person name="Park S."/>
            <person name="Wan K.H."/>
            <person name="Rubin G.M."/>
            <person name="Celniker S.E."/>
        </authorList>
    </citation>
    <scope>NUCLEOTIDE SEQUENCE [LARGE SCALE MRNA]</scope>
    <source>
        <strain>Berkeley</strain>
        <tissue>Embryo</tissue>
    </source>
</reference>
<sequence length="680" mass="76928">MSIREKLLMKKIVKREKMKKELSQKKGNKNAQKQEPPKQNGNKPSKKPEKLSKKHVAKDEDDDLEEDFQEAPLPKKKQQKQPPKKQQIQVANSDSESDDDEQEDEADEDSDLDEVAEVDEEDVDSGSEDDDQQEDEDEEEPVPAKKTKLLPNKSKAQNGKPAKDDEPFTVESSLAALDYRDSDDRSFASLKGAVSEATLRAIKEMGFTEMTEIQSKSLTPLLKGRDLVGAAQTGSGKTLAFLIPAVELINKLRFMPRNGTGVIIISPTRELSMQTFGVLKELMAHHHHTYGLVMGGSNRQVESEKLGKGINILVATPGRLLDHLQNSPDFLYKNLQCLIIDEVDRILEIGFEEELKQIINLLPKRRQTMLFSATQTARIEALSKLALKSEPIYVGVHDNQDTATVDGLEQGYIVCPSEKRLLVLFTFLKKNRKKKVMVFFSSCMSVKYHHELFNYIDLPVTSIHGKQKQTKRTTTFFQFCNAESGILLCTDVAARGLDIPQVDWIVQYDPPDDPREYIHRVGRTARGSGTSGHALLLMRPEELGFLRYLKAAKVPLNEFEFSWQKIADIQLQLEKLIAKNYFLNQSAKEAFKSYVRAYDSHQLKQIFNVNTLDLQAVAKSFGFLVPPVVDLKVGAAKRERPEKRVGGGGFGFYKKMNEGSASKQRHFKQVNRDQAKKFMR</sequence>
<evidence type="ECO:0000255" key="1">
    <source>
        <dbReference type="PROSITE-ProRule" id="PRU00541"/>
    </source>
</evidence>
<evidence type="ECO:0000255" key="2">
    <source>
        <dbReference type="PROSITE-ProRule" id="PRU00542"/>
    </source>
</evidence>
<evidence type="ECO:0000256" key="3">
    <source>
        <dbReference type="SAM" id="MobiDB-lite"/>
    </source>
</evidence>
<evidence type="ECO:0000269" key="4">
    <source>
    </source>
</evidence>
<evidence type="ECO:0000305" key="5"/>
<name>DDX18_DROME</name>
<proteinExistence type="evidence at transcript level"/>